<reference key="1">
    <citation type="journal article" date="1994" name="J. Biol. Chem.">
        <title>Primary sequence and immunological characterization of beta-subunit of high conductance Ca(2+)-activated K+ channel from smooth muscle.</title>
        <authorList>
            <person name="Knaus H.-G."/>
            <person name="Folander K."/>
            <person name="Garcia-Calvo M."/>
            <person name="Garcia M.L."/>
            <person name="Kaczorowski G.J."/>
            <person name="Smith M."/>
            <person name="Swanson R."/>
        </authorList>
    </citation>
    <scope>NUCLEOTIDE SEQUENCE [MRNA]</scope>
    <scope>PROTEIN SEQUENCE OF 2-29</scope>
    <source>
        <tissue>Aorta</tissue>
        <tissue>Trachea</tissue>
    </source>
</reference>
<reference key="2">
    <citation type="submission" date="2007-06" db="EMBL/GenBank/DDBJ databases">
        <authorList>
            <consortium name="NIH - Mammalian Gene Collection (MGC) project"/>
        </authorList>
    </citation>
    <scope>NUCLEOTIDE SEQUENCE [LARGE SCALE MRNA]</scope>
    <source>
        <strain>Hereford</strain>
        <tissue>Uterus</tissue>
    </source>
</reference>
<sequence length="191" mass="21957">MGKKLVMAQRRGETRALCLGVAMVVGAVITYYILGTTVLPLYQKSVWTQESTCHLIETNIRDQEELEGKRVPQYPCLWVNVSSVGRWAVLYHTEDTRDQNHQCSYIPSSLDNYQVARADVEKVRARFHENQDFFCFSTTRENETSVLYRRLYGPQSLLFSLFWPTFLLTGGLLIIVMVKINQSLSILAAQR</sequence>
<name>KCMB1_BOVIN</name>
<protein>
    <recommendedName>
        <fullName>Calcium-activated potassium channel subunit beta-1</fullName>
    </recommendedName>
    <alternativeName>
        <fullName>BK channel subunit beta-1</fullName>
        <shortName>BKbeta</shortName>
        <shortName>BKbeta1</shortName>
    </alternativeName>
    <alternativeName>
        <fullName>Calcium-activated potassium channel, subfamily M subunit beta-1</fullName>
        <shortName>Calcium-activated potassium channel subunit beta</shortName>
    </alternativeName>
    <alternativeName>
        <fullName>Charybdotoxin receptor subunit beta-1</fullName>
    </alternativeName>
    <alternativeName>
        <fullName>K(VCA)beta-1</fullName>
    </alternativeName>
    <alternativeName>
        <fullName>Maxi K channel subunit beta-1</fullName>
    </alternativeName>
    <alternativeName>
        <fullName>Slo-beta-1</fullName>
        <shortName>Slo-beta</shortName>
    </alternativeName>
</protein>
<organism>
    <name type="scientific">Bos taurus</name>
    <name type="common">Bovine</name>
    <dbReference type="NCBI Taxonomy" id="9913"/>
    <lineage>
        <taxon>Eukaryota</taxon>
        <taxon>Metazoa</taxon>
        <taxon>Chordata</taxon>
        <taxon>Craniata</taxon>
        <taxon>Vertebrata</taxon>
        <taxon>Euteleostomi</taxon>
        <taxon>Mammalia</taxon>
        <taxon>Eutheria</taxon>
        <taxon>Laurasiatheria</taxon>
        <taxon>Artiodactyla</taxon>
        <taxon>Ruminantia</taxon>
        <taxon>Pecora</taxon>
        <taxon>Bovidae</taxon>
        <taxon>Bovinae</taxon>
        <taxon>Bos</taxon>
    </lineage>
</organism>
<accession>Q28067</accession>
<accession>A6QLJ1</accession>
<proteinExistence type="evidence at protein level"/>
<keyword id="KW-0903">Direct protein sequencing</keyword>
<keyword id="KW-0325">Glycoprotein</keyword>
<keyword id="KW-0407">Ion channel</keyword>
<keyword id="KW-0406">Ion transport</keyword>
<keyword id="KW-0472">Membrane</keyword>
<keyword id="KW-1185">Reference proteome</keyword>
<keyword id="KW-0812">Transmembrane</keyword>
<keyword id="KW-1133">Transmembrane helix</keyword>
<keyword id="KW-0813">Transport</keyword>
<evidence type="ECO:0000250" key="1"/>
<evidence type="ECO:0000255" key="2"/>
<evidence type="ECO:0000269" key="3">
    <source>
    </source>
</evidence>
<evidence type="ECO:0000305" key="4"/>
<dbReference type="EMBL" id="L26101">
    <property type="protein sequence ID" value="AAA21741.1"/>
    <property type="molecule type" value="mRNA"/>
</dbReference>
<dbReference type="EMBL" id="BC147983">
    <property type="protein sequence ID" value="AAI47984.1"/>
    <property type="molecule type" value="mRNA"/>
</dbReference>
<dbReference type="PIR" id="A54165">
    <property type="entry name" value="A54165"/>
</dbReference>
<dbReference type="RefSeq" id="NP_001001141.1">
    <property type="nucleotide sequence ID" value="NM_001001141.1"/>
</dbReference>
<dbReference type="SMR" id="Q28067"/>
<dbReference type="FunCoup" id="Q28067">
    <property type="interactions" value="19"/>
</dbReference>
<dbReference type="STRING" id="9913.ENSBTAP00000049066"/>
<dbReference type="ChEMBL" id="CHEMBL2111364"/>
<dbReference type="GlyCosmos" id="Q28067">
    <property type="glycosylation" value="2 sites, No reported glycans"/>
</dbReference>
<dbReference type="GlyGen" id="Q28067">
    <property type="glycosylation" value="2 sites"/>
</dbReference>
<dbReference type="PaxDb" id="9913-ENSBTAP00000049066"/>
<dbReference type="Ensembl" id="ENSBTAT00000075522.2">
    <property type="protein sequence ID" value="ENSBTAP00000060915.1"/>
    <property type="gene ID" value="ENSBTAG00000002985.6"/>
</dbReference>
<dbReference type="GeneID" id="407176"/>
<dbReference type="KEGG" id="bta:407176"/>
<dbReference type="CTD" id="3779"/>
<dbReference type="VEuPathDB" id="HostDB:ENSBTAG00000002985"/>
<dbReference type="VGNC" id="VGNC:30480">
    <property type="gene designation" value="KCNMB1"/>
</dbReference>
<dbReference type="eggNOG" id="ENOG502RZA0">
    <property type="taxonomic scope" value="Eukaryota"/>
</dbReference>
<dbReference type="GeneTree" id="ENSGT00950000183039"/>
<dbReference type="HOGENOM" id="CLU_085739_1_1_1"/>
<dbReference type="InParanoid" id="Q28067"/>
<dbReference type="OMA" id="PYPCLQV"/>
<dbReference type="OrthoDB" id="191686at2759"/>
<dbReference type="TreeFam" id="TF328589"/>
<dbReference type="Reactome" id="R-BTA-1296052">
    <property type="pathway name" value="Ca2+ activated K+ channels"/>
</dbReference>
<dbReference type="PRO" id="PR:Q28067"/>
<dbReference type="Proteomes" id="UP000009136">
    <property type="component" value="Chromosome 20"/>
</dbReference>
<dbReference type="Bgee" id="ENSBTAG00000002985">
    <property type="expression patterns" value="Expressed in myometrium and 102 other cell types or tissues"/>
</dbReference>
<dbReference type="GO" id="GO:0008076">
    <property type="term" value="C:voltage-gated potassium channel complex"/>
    <property type="evidence" value="ECO:0000318"/>
    <property type="project" value="GO_Central"/>
</dbReference>
<dbReference type="GO" id="GO:0015269">
    <property type="term" value="F:calcium-activated potassium channel activity"/>
    <property type="evidence" value="ECO:0000318"/>
    <property type="project" value="GO_Central"/>
</dbReference>
<dbReference type="GO" id="GO:0015459">
    <property type="term" value="F:potassium channel regulator activity"/>
    <property type="evidence" value="ECO:0000318"/>
    <property type="project" value="GO_Central"/>
</dbReference>
<dbReference type="GO" id="GO:0005513">
    <property type="term" value="P:detection of calcium ion"/>
    <property type="evidence" value="ECO:0000318"/>
    <property type="project" value="GO_Central"/>
</dbReference>
<dbReference type="InterPro" id="IPR003930">
    <property type="entry name" value="K_chnl_Ca-activ_BK_bsu"/>
</dbReference>
<dbReference type="PANTHER" id="PTHR10258">
    <property type="entry name" value="CALCIUM-ACTIVATED POTASSIUM CHANNEL SUBUNIT BETA"/>
    <property type="match status" value="1"/>
</dbReference>
<dbReference type="PANTHER" id="PTHR10258:SF1">
    <property type="entry name" value="CALCIUM-ACTIVATED POTASSIUM CHANNEL SUBUNIT BETA-1"/>
    <property type="match status" value="1"/>
</dbReference>
<dbReference type="Pfam" id="PF03185">
    <property type="entry name" value="CaKB"/>
    <property type="match status" value="1"/>
</dbReference>
<dbReference type="PRINTS" id="PR01450">
    <property type="entry name" value="BKCHANNELB"/>
</dbReference>
<gene>
    <name type="primary">KCNMB1</name>
</gene>
<comment type="function">
    <text evidence="1">Regulatory subunit of the calcium activated potassium KCNMA1 (maxiK) channel. Modulates the calcium sensitivity and gating kinetics of KCNMA1, thereby contributing to KCNMA1 channel diversity. Increases the apparent Ca(2+)/voltage sensitivity of the KCNMA1 channel. It also modifies KCNMA1 channel kinetics and alters its pharmacological properties. It slows down the activation and the deactivation kinetics of the channel. Acts as a negative regulator of smooth muscle contraction by enhancing the calcium sensitivity to KCNMA1. Its presence is also a requirement for internal binding of the KCNMA1 channel opener dehydrosoyasaponin I (DHS-1) triterpene glycoside and for external binding of the agonist hormone 17-beta-estradiol (E2). Increases the binding activity of charybdotoxin (CTX) toxin to KCNMA1 peptide blocker by increasing the CTX association rate and decreasing the dissociation rate (By similarity).</text>
</comment>
<comment type="subunit">
    <text evidence="1">Interacts with KCNMA1 tetramer. There are probably 4 molecules of KCMNB1 per KCNMA1 tetramer (By similarity).</text>
</comment>
<comment type="subcellular location">
    <subcellularLocation>
        <location>Membrane</location>
        <topology>Multi-pass membrane protein</topology>
    </subcellularLocation>
</comment>
<comment type="PTM">
    <text evidence="1">N-glycosylated.</text>
</comment>
<comment type="similarity">
    <text evidence="4">Belongs to the KCNMB (TC 8.A.14.1) family. KCNMB1 subfamily.</text>
</comment>
<feature type="initiator methionine" description="Removed" evidence="3">
    <location>
        <position position="1"/>
    </location>
</feature>
<feature type="chain" id="PRO_0000187044" description="Calcium-activated potassium channel subunit beta-1">
    <location>
        <begin position="2"/>
        <end position="191"/>
    </location>
</feature>
<feature type="topological domain" description="Cytoplasmic" evidence="2">
    <location>
        <begin position="2"/>
        <end position="18"/>
    </location>
</feature>
<feature type="transmembrane region" description="Helical; Name=1" evidence="2">
    <location>
        <begin position="19"/>
        <end position="39"/>
    </location>
</feature>
<feature type="topological domain" description="Extracellular" evidence="2">
    <location>
        <begin position="40"/>
        <end position="157"/>
    </location>
</feature>
<feature type="transmembrane region" description="Helical; Name=2" evidence="2">
    <location>
        <begin position="158"/>
        <end position="178"/>
    </location>
</feature>
<feature type="topological domain" description="Cytoplasmic" evidence="2">
    <location>
        <begin position="179"/>
        <end position="191"/>
    </location>
</feature>
<feature type="glycosylation site" description="N-linked (GlcNAc...) asparagine" evidence="2">
    <location>
        <position position="80"/>
    </location>
</feature>
<feature type="glycosylation site" description="N-linked (GlcNAc...) asparagine" evidence="2">
    <location>
        <position position="142"/>
    </location>
</feature>